<organism>
    <name type="scientific">Vibrio cholerae serotype O1 (strain M66-2)</name>
    <dbReference type="NCBI Taxonomy" id="579112"/>
    <lineage>
        <taxon>Bacteria</taxon>
        <taxon>Pseudomonadati</taxon>
        <taxon>Pseudomonadota</taxon>
        <taxon>Gammaproteobacteria</taxon>
        <taxon>Vibrionales</taxon>
        <taxon>Vibrionaceae</taxon>
        <taxon>Vibrio</taxon>
    </lineage>
</organism>
<comment type="function">
    <text evidence="1">DNA ligase that catalyzes the formation of phosphodiester linkages between 5'-phosphoryl and 3'-hydroxyl groups in double-stranded DNA using NAD as a coenzyme and as the energy source for the reaction. It is essential for DNA replication and repair of damaged DNA.</text>
</comment>
<comment type="catalytic activity">
    <reaction evidence="1">
        <text>NAD(+) + (deoxyribonucleotide)n-3'-hydroxyl + 5'-phospho-(deoxyribonucleotide)m = (deoxyribonucleotide)n+m + AMP + beta-nicotinamide D-nucleotide.</text>
        <dbReference type="EC" id="6.5.1.2"/>
    </reaction>
</comment>
<comment type="cofactor">
    <cofactor evidence="1">
        <name>Mg(2+)</name>
        <dbReference type="ChEBI" id="CHEBI:18420"/>
    </cofactor>
    <cofactor evidence="1">
        <name>Mn(2+)</name>
        <dbReference type="ChEBI" id="CHEBI:29035"/>
    </cofactor>
</comment>
<comment type="similarity">
    <text evidence="1">Belongs to the NAD-dependent DNA ligase family. LigA subfamily.</text>
</comment>
<accession>C3LTL9</accession>
<keyword id="KW-0227">DNA damage</keyword>
<keyword id="KW-0234">DNA repair</keyword>
<keyword id="KW-0235">DNA replication</keyword>
<keyword id="KW-0436">Ligase</keyword>
<keyword id="KW-0460">Magnesium</keyword>
<keyword id="KW-0464">Manganese</keyword>
<keyword id="KW-0479">Metal-binding</keyword>
<keyword id="KW-0520">NAD</keyword>
<keyword id="KW-0862">Zinc</keyword>
<evidence type="ECO:0000255" key="1">
    <source>
        <dbReference type="HAMAP-Rule" id="MF_01588"/>
    </source>
</evidence>
<reference key="1">
    <citation type="journal article" date="2008" name="PLoS ONE">
        <title>A recalibrated molecular clock and independent origins for the cholera pandemic clones.</title>
        <authorList>
            <person name="Feng L."/>
            <person name="Reeves P.R."/>
            <person name="Lan R."/>
            <person name="Ren Y."/>
            <person name="Gao C."/>
            <person name="Zhou Z."/>
            <person name="Ren Y."/>
            <person name="Cheng J."/>
            <person name="Wang W."/>
            <person name="Wang J."/>
            <person name="Qian W."/>
            <person name="Li D."/>
            <person name="Wang L."/>
        </authorList>
    </citation>
    <scope>NUCLEOTIDE SEQUENCE [LARGE SCALE GENOMIC DNA]</scope>
    <source>
        <strain>M66-2</strain>
    </source>
</reference>
<sequence length="669" mass="73371">MSDVAQRLTELRKTLHEHGVRYYVEDAPTIPDAEYDRLMRELLELEAAHPELMSSDSPSLRVGGRPLDAFESVVHEIPMLSLDNAFDDGELESFYRRMTDRIQAVQHSAFCCEPKLDGLAVSLLYENGVLTRAATRGDGMTGENITENVRTIKAIPLRLQGADFPTRLEVRGEVFMPKAGFEALNARALKKGEKQFVNPRNAAAGSLRQLDSKITAQRPLAFYAYSVGVIEGGELATSHYQRFLQLKGWGLPICPETKLVTSLAEVKAFYQDILQRRQFLAYEIDGVVIKVDDIQLQERLGFVARAPRWAIAYKFPAQEELTLLNDVEFQVGRTGAITPVAKLEPVFVGGVTVSNATLHNADEIERLGVMVGDTVVIRRAGDVIPQIVSVVLERRPENAKSIVFPTRCPVCQSDVERVEGEAVARCSGGLICQAQRKEALKHFVSRKAMDVEGLGDKVIEQLVDREMVSTPADLFRLRAGELTILERMGPKSAQNVIDALNKAKQTTLPKFLYALGIREVGDATALNLAQHFLSLEAIQQASLEQFIEVPDVGVVVASHLLAFFAQDRNQQVINELLEQGITWPALTAAPVAVDSALAGKIVVLTGSFTQLSRNDAKAALQALGAKVTGSVSKNTDIVFAGEAAGSKLAKATELGIQVFDEQALIEFLK</sequence>
<name>DNLJ_VIBCM</name>
<gene>
    <name evidence="1" type="primary">ligA</name>
    <name type="ordered locus">VCM66_0927</name>
</gene>
<protein>
    <recommendedName>
        <fullName evidence="1">DNA ligase</fullName>
        <ecNumber evidence="1">6.5.1.2</ecNumber>
    </recommendedName>
    <alternativeName>
        <fullName evidence="1">Polydeoxyribonucleotide synthase [NAD(+)]</fullName>
    </alternativeName>
</protein>
<proteinExistence type="inferred from homology"/>
<feature type="chain" id="PRO_0000380504" description="DNA ligase">
    <location>
        <begin position="1"/>
        <end position="669"/>
    </location>
</feature>
<feature type="domain" description="BRCT" evidence="1">
    <location>
        <begin position="592"/>
        <end position="669"/>
    </location>
</feature>
<feature type="active site" description="N6-AMP-lysine intermediate" evidence="1">
    <location>
        <position position="115"/>
    </location>
</feature>
<feature type="binding site" evidence="1">
    <location>
        <begin position="32"/>
        <end position="36"/>
    </location>
    <ligand>
        <name>NAD(+)</name>
        <dbReference type="ChEBI" id="CHEBI:57540"/>
    </ligand>
</feature>
<feature type="binding site" evidence="1">
    <location>
        <begin position="81"/>
        <end position="82"/>
    </location>
    <ligand>
        <name>NAD(+)</name>
        <dbReference type="ChEBI" id="CHEBI:57540"/>
    </ligand>
</feature>
<feature type="binding site" evidence="1">
    <location>
        <position position="113"/>
    </location>
    <ligand>
        <name>NAD(+)</name>
        <dbReference type="ChEBI" id="CHEBI:57540"/>
    </ligand>
</feature>
<feature type="binding site" evidence="1">
    <location>
        <position position="136"/>
    </location>
    <ligand>
        <name>NAD(+)</name>
        <dbReference type="ChEBI" id="CHEBI:57540"/>
    </ligand>
</feature>
<feature type="binding site" evidence="1">
    <location>
        <position position="173"/>
    </location>
    <ligand>
        <name>NAD(+)</name>
        <dbReference type="ChEBI" id="CHEBI:57540"/>
    </ligand>
</feature>
<feature type="binding site" evidence="1">
    <location>
        <position position="290"/>
    </location>
    <ligand>
        <name>NAD(+)</name>
        <dbReference type="ChEBI" id="CHEBI:57540"/>
    </ligand>
</feature>
<feature type="binding site" evidence="1">
    <location>
        <position position="314"/>
    </location>
    <ligand>
        <name>NAD(+)</name>
        <dbReference type="ChEBI" id="CHEBI:57540"/>
    </ligand>
</feature>
<feature type="binding site" evidence="1">
    <location>
        <position position="408"/>
    </location>
    <ligand>
        <name>Zn(2+)</name>
        <dbReference type="ChEBI" id="CHEBI:29105"/>
    </ligand>
</feature>
<feature type="binding site" evidence="1">
    <location>
        <position position="411"/>
    </location>
    <ligand>
        <name>Zn(2+)</name>
        <dbReference type="ChEBI" id="CHEBI:29105"/>
    </ligand>
</feature>
<feature type="binding site" evidence="1">
    <location>
        <position position="426"/>
    </location>
    <ligand>
        <name>Zn(2+)</name>
        <dbReference type="ChEBI" id="CHEBI:29105"/>
    </ligand>
</feature>
<feature type="binding site" evidence="1">
    <location>
        <position position="432"/>
    </location>
    <ligand>
        <name>Zn(2+)</name>
        <dbReference type="ChEBI" id="CHEBI:29105"/>
    </ligand>
</feature>
<dbReference type="EC" id="6.5.1.2" evidence="1"/>
<dbReference type="EMBL" id="CP001233">
    <property type="protein sequence ID" value="ACP05245.1"/>
    <property type="molecule type" value="Genomic_DNA"/>
</dbReference>
<dbReference type="RefSeq" id="WP_001286046.1">
    <property type="nucleotide sequence ID" value="NC_012578.1"/>
</dbReference>
<dbReference type="SMR" id="C3LTL9"/>
<dbReference type="KEGG" id="vcm:VCM66_0927"/>
<dbReference type="HOGENOM" id="CLU_007764_2_1_6"/>
<dbReference type="Proteomes" id="UP000001217">
    <property type="component" value="Chromosome I"/>
</dbReference>
<dbReference type="GO" id="GO:0005829">
    <property type="term" value="C:cytosol"/>
    <property type="evidence" value="ECO:0007669"/>
    <property type="project" value="TreeGrafter"/>
</dbReference>
<dbReference type="GO" id="GO:0003677">
    <property type="term" value="F:DNA binding"/>
    <property type="evidence" value="ECO:0007669"/>
    <property type="project" value="InterPro"/>
</dbReference>
<dbReference type="GO" id="GO:0003911">
    <property type="term" value="F:DNA ligase (NAD+) activity"/>
    <property type="evidence" value="ECO:0007669"/>
    <property type="project" value="UniProtKB-UniRule"/>
</dbReference>
<dbReference type="GO" id="GO:0046872">
    <property type="term" value="F:metal ion binding"/>
    <property type="evidence" value="ECO:0007669"/>
    <property type="project" value="UniProtKB-KW"/>
</dbReference>
<dbReference type="GO" id="GO:0006281">
    <property type="term" value="P:DNA repair"/>
    <property type="evidence" value="ECO:0007669"/>
    <property type="project" value="UniProtKB-KW"/>
</dbReference>
<dbReference type="GO" id="GO:0006260">
    <property type="term" value="P:DNA replication"/>
    <property type="evidence" value="ECO:0007669"/>
    <property type="project" value="UniProtKB-KW"/>
</dbReference>
<dbReference type="CDD" id="cd17748">
    <property type="entry name" value="BRCT_DNA_ligase_like"/>
    <property type="match status" value="1"/>
</dbReference>
<dbReference type="CDD" id="cd00114">
    <property type="entry name" value="LIGANc"/>
    <property type="match status" value="1"/>
</dbReference>
<dbReference type="FunFam" id="1.10.150.20:FF:000006">
    <property type="entry name" value="DNA ligase"/>
    <property type="match status" value="1"/>
</dbReference>
<dbReference type="FunFam" id="1.10.150.20:FF:000007">
    <property type="entry name" value="DNA ligase"/>
    <property type="match status" value="1"/>
</dbReference>
<dbReference type="FunFam" id="1.10.287.610:FF:000002">
    <property type="entry name" value="DNA ligase"/>
    <property type="match status" value="1"/>
</dbReference>
<dbReference type="FunFam" id="2.40.50.140:FF:000012">
    <property type="entry name" value="DNA ligase"/>
    <property type="match status" value="1"/>
</dbReference>
<dbReference type="FunFam" id="3.30.470.30:FF:000001">
    <property type="entry name" value="DNA ligase"/>
    <property type="match status" value="1"/>
</dbReference>
<dbReference type="FunFam" id="6.20.10.30:FF:000001">
    <property type="entry name" value="DNA ligase"/>
    <property type="match status" value="1"/>
</dbReference>
<dbReference type="Gene3D" id="6.20.10.30">
    <property type="match status" value="1"/>
</dbReference>
<dbReference type="Gene3D" id="1.10.150.20">
    <property type="entry name" value="5' to 3' exonuclease, C-terminal subdomain"/>
    <property type="match status" value="2"/>
</dbReference>
<dbReference type="Gene3D" id="3.40.50.10190">
    <property type="entry name" value="BRCT domain"/>
    <property type="match status" value="1"/>
</dbReference>
<dbReference type="Gene3D" id="3.30.470.30">
    <property type="entry name" value="DNA ligase/mRNA capping enzyme"/>
    <property type="match status" value="1"/>
</dbReference>
<dbReference type="Gene3D" id="1.10.287.610">
    <property type="entry name" value="Helix hairpin bin"/>
    <property type="match status" value="1"/>
</dbReference>
<dbReference type="Gene3D" id="2.40.50.140">
    <property type="entry name" value="Nucleic acid-binding proteins"/>
    <property type="match status" value="1"/>
</dbReference>
<dbReference type="HAMAP" id="MF_01588">
    <property type="entry name" value="DNA_ligase_A"/>
    <property type="match status" value="1"/>
</dbReference>
<dbReference type="InterPro" id="IPR001357">
    <property type="entry name" value="BRCT_dom"/>
</dbReference>
<dbReference type="InterPro" id="IPR036420">
    <property type="entry name" value="BRCT_dom_sf"/>
</dbReference>
<dbReference type="InterPro" id="IPR041663">
    <property type="entry name" value="DisA/LigA_HHH"/>
</dbReference>
<dbReference type="InterPro" id="IPR001679">
    <property type="entry name" value="DNA_ligase"/>
</dbReference>
<dbReference type="InterPro" id="IPR018239">
    <property type="entry name" value="DNA_ligase_AS"/>
</dbReference>
<dbReference type="InterPro" id="IPR033136">
    <property type="entry name" value="DNA_ligase_CS"/>
</dbReference>
<dbReference type="InterPro" id="IPR013839">
    <property type="entry name" value="DNAligase_adenylation"/>
</dbReference>
<dbReference type="InterPro" id="IPR013840">
    <property type="entry name" value="DNAligase_N"/>
</dbReference>
<dbReference type="InterPro" id="IPR003583">
    <property type="entry name" value="Hlx-hairpin-Hlx_DNA-bd_motif"/>
</dbReference>
<dbReference type="InterPro" id="IPR012340">
    <property type="entry name" value="NA-bd_OB-fold"/>
</dbReference>
<dbReference type="InterPro" id="IPR004150">
    <property type="entry name" value="NAD_DNA_ligase_OB"/>
</dbReference>
<dbReference type="InterPro" id="IPR010994">
    <property type="entry name" value="RuvA_2-like"/>
</dbReference>
<dbReference type="InterPro" id="IPR004149">
    <property type="entry name" value="Znf_DNAligase_C4"/>
</dbReference>
<dbReference type="NCBIfam" id="TIGR00575">
    <property type="entry name" value="dnlj"/>
    <property type="match status" value="1"/>
</dbReference>
<dbReference type="NCBIfam" id="NF005932">
    <property type="entry name" value="PRK07956.1"/>
    <property type="match status" value="1"/>
</dbReference>
<dbReference type="PANTHER" id="PTHR23389">
    <property type="entry name" value="CHROMOSOME TRANSMISSION FIDELITY FACTOR 18"/>
    <property type="match status" value="1"/>
</dbReference>
<dbReference type="PANTHER" id="PTHR23389:SF9">
    <property type="entry name" value="DNA LIGASE"/>
    <property type="match status" value="1"/>
</dbReference>
<dbReference type="Pfam" id="PF00533">
    <property type="entry name" value="BRCT"/>
    <property type="match status" value="1"/>
</dbReference>
<dbReference type="Pfam" id="PF01653">
    <property type="entry name" value="DNA_ligase_aden"/>
    <property type="match status" value="1"/>
</dbReference>
<dbReference type="Pfam" id="PF03120">
    <property type="entry name" value="DNA_ligase_OB"/>
    <property type="match status" value="1"/>
</dbReference>
<dbReference type="Pfam" id="PF03119">
    <property type="entry name" value="DNA_ligase_ZBD"/>
    <property type="match status" value="1"/>
</dbReference>
<dbReference type="Pfam" id="PF12826">
    <property type="entry name" value="HHH_2"/>
    <property type="match status" value="1"/>
</dbReference>
<dbReference type="Pfam" id="PF14520">
    <property type="entry name" value="HHH_5"/>
    <property type="match status" value="1"/>
</dbReference>
<dbReference type="Pfam" id="PF22745">
    <property type="entry name" value="Nlig-Ia"/>
    <property type="match status" value="1"/>
</dbReference>
<dbReference type="PIRSF" id="PIRSF001604">
    <property type="entry name" value="LigA"/>
    <property type="match status" value="1"/>
</dbReference>
<dbReference type="SMART" id="SM00292">
    <property type="entry name" value="BRCT"/>
    <property type="match status" value="1"/>
</dbReference>
<dbReference type="SMART" id="SM00278">
    <property type="entry name" value="HhH1"/>
    <property type="match status" value="4"/>
</dbReference>
<dbReference type="SMART" id="SM00532">
    <property type="entry name" value="LIGANc"/>
    <property type="match status" value="1"/>
</dbReference>
<dbReference type="SUPFAM" id="SSF52113">
    <property type="entry name" value="BRCT domain"/>
    <property type="match status" value="1"/>
</dbReference>
<dbReference type="SUPFAM" id="SSF56091">
    <property type="entry name" value="DNA ligase/mRNA capping enzyme, catalytic domain"/>
    <property type="match status" value="1"/>
</dbReference>
<dbReference type="SUPFAM" id="SSF50249">
    <property type="entry name" value="Nucleic acid-binding proteins"/>
    <property type="match status" value="1"/>
</dbReference>
<dbReference type="SUPFAM" id="SSF47781">
    <property type="entry name" value="RuvA domain 2-like"/>
    <property type="match status" value="1"/>
</dbReference>
<dbReference type="PROSITE" id="PS50172">
    <property type="entry name" value="BRCT"/>
    <property type="match status" value="1"/>
</dbReference>
<dbReference type="PROSITE" id="PS01055">
    <property type="entry name" value="DNA_LIGASE_N1"/>
    <property type="match status" value="1"/>
</dbReference>
<dbReference type="PROSITE" id="PS01056">
    <property type="entry name" value="DNA_LIGASE_N2"/>
    <property type="match status" value="1"/>
</dbReference>